<evidence type="ECO:0000255" key="1">
    <source>
        <dbReference type="HAMAP-Rule" id="MF_00151"/>
    </source>
</evidence>
<dbReference type="EC" id="2.7.7.3" evidence="1"/>
<dbReference type="EMBL" id="CP000116">
    <property type="protein sequence ID" value="AAZ96333.1"/>
    <property type="molecule type" value="Genomic_DNA"/>
</dbReference>
<dbReference type="RefSeq" id="WP_011310893.1">
    <property type="nucleotide sequence ID" value="NC_007404.1"/>
</dbReference>
<dbReference type="SMR" id="Q3SLS2"/>
<dbReference type="STRING" id="292415.Tbd_0380"/>
<dbReference type="KEGG" id="tbd:Tbd_0380"/>
<dbReference type="eggNOG" id="COG0669">
    <property type="taxonomic scope" value="Bacteria"/>
</dbReference>
<dbReference type="HOGENOM" id="CLU_100149_0_1_4"/>
<dbReference type="OrthoDB" id="9806661at2"/>
<dbReference type="UniPathway" id="UPA00241">
    <property type="reaction ID" value="UER00355"/>
</dbReference>
<dbReference type="Proteomes" id="UP000008291">
    <property type="component" value="Chromosome"/>
</dbReference>
<dbReference type="GO" id="GO:0005737">
    <property type="term" value="C:cytoplasm"/>
    <property type="evidence" value="ECO:0007669"/>
    <property type="project" value="UniProtKB-SubCell"/>
</dbReference>
<dbReference type="GO" id="GO:0005524">
    <property type="term" value="F:ATP binding"/>
    <property type="evidence" value="ECO:0007669"/>
    <property type="project" value="UniProtKB-KW"/>
</dbReference>
<dbReference type="GO" id="GO:0004595">
    <property type="term" value="F:pantetheine-phosphate adenylyltransferase activity"/>
    <property type="evidence" value="ECO:0007669"/>
    <property type="project" value="UniProtKB-UniRule"/>
</dbReference>
<dbReference type="GO" id="GO:0015937">
    <property type="term" value="P:coenzyme A biosynthetic process"/>
    <property type="evidence" value="ECO:0007669"/>
    <property type="project" value="UniProtKB-UniRule"/>
</dbReference>
<dbReference type="CDD" id="cd02163">
    <property type="entry name" value="PPAT"/>
    <property type="match status" value="1"/>
</dbReference>
<dbReference type="Gene3D" id="3.40.50.620">
    <property type="entry name" value="HUPs"/>
    <property type="match status" value="1"/>
</dbReference>
<dbReference type="HAMAP" id="MF_00151">
    <property type="entry name" value="PPAT_bact"/>
    <property type="match status" value="1"/>
</dbReference>
<dbReference type="InterPro" id="IPR004821">
    <property type="entry name" value="Cyt_trans-like"/>
</dbReference>
<dbReference type="InterPro" id="IPR001980">
    <property type="entry name" value="PPAT"/>
</dbReference>
<dbReference type="InterPro" id="IPR014729">
    <property type="entry name" value="Rossmann-like_a/b/a_fold"/>
</dbReference>
<dbReference type="NCBIfam" id="TIGR01510">
    <property type="entry name" value="coaD_prev_kdtB"/>
    <property type="match status" value="1"/>
</dbReference>
<dbReference type="NCBIfam" id="TIGR00125">
    <property type="entry name" value="cyt_tran_rel"/>
    <property type="match status" value="1"/>
</dbReference>
<dbReference type="PANTHER" id="PTHR21342">
    <property type="entry name" value="PHOSPHOPANTETHEINE ADENYLYLTRANSFERASE"/>
    <property type="match status" value="1"/>
</dbReference>
<dbReference type="PANTHER" id="PTHR21342:SF1">
    <property type="entry name" value="PHOSPHOPANTETHEINE ADENYLYLTRANSFERASE"/>
    <property type="match status" value="1"/>
</dbReference>
<dbReference type="Pfam" id="PF01467">
    <property type="entry name" value="CTP_transf_like"/>
    <property type="match status" value="1"/>
</dbReference>
<dbReference type="PRINTS" id="PR01020">
    <property type="entry name" value="LPSBIOSNTHSS"/>
</dbReference>
<dbReference type="SUPFAM" id="SSF52374">
    <property type="entry name" value="Nucleotidylyl transferase"/>
    <property type="match status" value="1"/>
</dbReference>
<organism>
    <name type="scientific">Thiobacillus denitrificans (strain ATCC 25259 / T1)</name>
    <dbReference type="NCBI Taxonomy" id="292415"/>
    <lineage>
        <taxon>Bacteria</taxon>
        <taxon>Pseudomonadati</taxon>
        <taxon>Pseudomonadota</taxon>
        <taxon>Betaproteobacteria</taxon>
        <taxon>Nitrosomonadales</taxon>
        <taxon>Thiobacillaceae</taxon>
        <taxon>Thiobacillus</taxon>
    </lineage>
</organism>
<keyword id="KW-0067">ATP-binding</keyword>
<keyword id="KW-0173">Coenzyme A biosynthesis</keyword>
<keyword id="KW-0963">Cytoplasm</keyword>
<keyword id="KW-0460">Magnesium</keyword>
<keyword id="KW-0547">Nucleotide-binding</keyword>
<keyword id="KW-0548">Nucleotidyltransferase</keyword>
<keyword id="KW-1185">Reference proteome</keyword>
<keyword id="KW-0808">Transferase</keyword>
<accession>Q3SLS2</accession>
<comment type="function">
    <text evidence="1">Reversibly transfers an adenylyl group from ATP to 4'-phosphopantetheine, yielding dephospho-CoA (dPCoA) and pyrophosphate.</text>
</comment>
<comment type="catalytic activity">
    <reaction evidence="1">
        <text>(R)-4'-phosphopantetheine + ATP + H(+) = 3'-dephospho-CoA + diphosphate</text>
        <dbReference type="Rhea" id="RHEA:19801"/>
        <dbReference type="ChEBI" id="CHEBI:15378"/>
        <dbReference type="ChEBI" id="CHEBI:30616"/>
        <dbReference type="ChEBI" id="CHEBI:33019"/>
        <dbReference type="ChEBI" id="CHEBI:57328"/>
        <dbReference type="ChEBI" id="CHEBI:61723"/>
        <dbReference type="EC" id="2.7.7.3"/>
    </reaction>
</comment>
<comment type="cofactor">
    <cofactor evidence="1">
        <name>Mg(2+)</name>
        <dbReference type="ChEBI" id="CHEBI:18420"/>
    </cofactor>
</comment>
<comment type="pathway">
    <text evidence="1">Cofactor biosynthesis; coenzyme A biosynthesis; CoA from (R)-pantothenate: step 4/5.</text>
</comment>
<comment type="subunit">
    <text evidence="1">Homohexamer.</text>
</comment>
<comment type="subcellular location">
    <subcellularLocation>
        <location evidence="1">Cytoplasm</location>
    </subcellularLocation>
</comment>
<comment type="similarity">
    <text evidence="1">Belongs to the bacterial CoaD family.</text>
</comment>
<reference key="1">
    <citation type="journal article" date="2006" name="J. Bacteriol.">
        <title>The genome sequence of the obligately chemolithoautotrophic, facultatively anaerobic bacterium Thiobacillus denitrificans.</title>
        <authorList>
            <person name="Beller H.R."/>
            <person name="Chain P.S."/>
            <person name="Letain T.E."/>
            <person name="Chakicherla A."/>
            <person name="Larimer F.W."/>
            <person name="Richardson P.M."/>
            <person name="Coleman M.A."/>
            <person name="Wood A.P."/>
            <person name="Kelly D.P."/>
        </authorList>
    </citation>
    <scope>NUCLEOTIDE SEQUENCE [LARGE SCALE GENOMIC DNA]</scope>
    <source>
        <strain>ATCC 25259 / T1</strain>
    </source>
</reference>
<gene>
    <name evidence="1" type="primary">coaD</name>
    <name type="ordered locus">Tbd_0380</name>
</gene>
<feature type="chain" id="PRO_1000011272" description="Phosphopantetheine adenylyltransferase">
    <location>
        <begin position="1"/>
        <end position="160"/>
    </location>
</feature>
<feature type="binding site" evidence="1">
    <location>
        <begin position="9"/>
        <end position="10"/>
    </location>
    <ligand>
        <name>ATP</name>
        <dbReference type="ChEBI" id="CHEBI:30616"/>
    </ligand>
</feature>
<feature type="binding site" evidence="1">
    <location>
        <position position="9"/>
    </location>
    <ligand>
        <name>substrate</name>
    </ligand>
</feature>
<feature type="binding site" evidence="1">
    <location>
        <position position="17"/>
    </location>
    <ligand>
        <name>ATP</name>
        <dbReference type="ChEBI" id="CHEBI:30616"/>
    </ligand>
</feature>
<feature type="binding site" evidence="1">
    <location>
        <position position="41"/>
    </location>
    <ligand>
        <name>substrate</name>
    </ligand>
</feature>
<feature type="binding site" evidence="1">
    <location>
        <position position="73"/>
    </location>
    <ligand>
        <name>substrate</name>
    </ligand>
</feature>
<feature type="binding site" evidence="1">
    <location>
        <position position="87"/>
    </location>
    <ligand>
        <name>substrate</name>
    </ligand>
</feature>
<feature type="binding site" evidence="1">
    <location>
        <begin position="88"/>
        <end position="90"/>
    </location>
    <ligand>
        <name>ATP</name>
        <dbReference type="ChEBI" id="CHEBI:30616"/>
    </ligand>
</feature>
<feature type="binding site" evidence="1">
    <location>
        <position position="98"/>
    </location>
    <ligand>
        <name>ATP</name>
        <dbReference type="ChEBI" id="CHEBI:30616"/>
    </ligand>
</feature>
<feature type="binding site" evidence="1">
    <location>
        <begin position="123"/>
        <end position="129"/>
    </location>
    <ligand>
        <name>ATP</name>
        <dbReference type="ChEBI" id="CHEBI:30616"/>
    </ligand>
</feature>
<feature type="site" description="Transition state stabilizer" evidence="1">
    <location>
        <position position="17"/>
    </location>
</feature>
<proteinExistence type="inferred from homology"/>
<protein>
    <recommendedName>
        <fullName evidence="1">Phosphopantetheine adenylyltransferase</fullName>
        <ecNumber evidence="1">2.7.7.3</ecNumber>
    </recommendedName>
    <alternativeName>
        <fullName evidence="1">Dephospho-CoA pyrophosphorylase</fullName>
    </alternativeName>
    <alternativeName>
        <fullName evidence="1">Pantetheine-phosphate adenylyltransferase</fullName>
        <shortName evidence="1">PPAT</shortName>
    </alternativeName>
</protein>
<name>COAD_THIDA</name>
<sequence>MLTAVYPGTFDPITRGHEDLVRRAVRLFDRVVVAVAESRNKRPFFSMDERVAMTREVLADVPQVRVEGFSGLLIDFVAEQGAIAVLRGLRAASDFEYEFQLAGMNRNLKPDIETLFLTPSEQYMFISASMIREIAQFGGDVTPFVHPLVARRLSEKIREN</sequence>